<protein>
    <recommendedName>
        <fullName>Mediator of RNA polymerase II transcription subunit 24</fullName>
    </recommendedName>
    <alternativeName>
        <fullName>Mediator complex subunit 24</fullName>
    </alternativeName>
    <alternativeName>
        <fullName>Thyroid hormone receptor-associated protein 4</fullName>
    </alternativeName>
    <alternativeName>
        <fullName>Thyroid hormone receptor-associated protein complex 100 kDa component</fullName>
        <shortName>Trap100</shortName>
        <shortName>mTRAP100</shortName>
    </alternativeName>
</protein>
<dbReference type="EMBL" id="AF126543">
    <property type="protein sequence ID" value="AAD42776.1"/>
    <property type="molecule type" value="mRNA"/>
</dbReference>
<dbReference type="EMBL" id="AF483498">
    <property type="protein sequence ID" value="AAL90772.1"/>
    <property type="molecule type" value="mRNA"/>
</dbReference>
<dbReference type="EMBL" id="AF483499">
    <property type="protein sequence ID" value="AAL90773.1"/>
    <property type="molecule type" value="mRNA"/>
</dbReference>
<dbReference type="EMBL" id="AK020269">
    <property type="protein sequence ID" value="BAB32051.1"/>
    <property type="molecule type" value="mRNA"/>
</dbReference>
<dbReference type="EMBL" id="AK154618">
    <property type="protein sequence ID" value="BAE32717.1"/>
    <property type="molecule type" value="mRNA"/>
</dbReference>
<dbReference type="EMBL" id="AL590963">
    <property type="status" value="NOT_ANNOTATED_CDS"/>
    <property type="molecule type" value="Genomic_DNA"/>
</dbReference>
<dbReference type="EMBL" id="BC005409">
    <property type="protein sequence ID" value="AAH05409.1"/>
    <property type="molecule type" value="mRNA"/>
</dbReference>
<dbReference type="CCDS" id="CCDS25361.2">
    <molecule id="Q99K74-1"/>
</dbReference>
<dbReference type="RefSeq" id="NP_001348924.1">
    <molecule id="Q99K74-1"/>
    <property type="nucleotide sequence ID" value="NM_001361995.2"/>
</dbReference>
<dbReference type="RefSeq" id="NP_001365856.1">
    <molecule id="Q99K74-1"/>
    <property type="nucleotide sequence ID" value="NM_001378927.1"/>
</dbReference>
<dbReference type="RefSeq" id="NP_035999.2">
    <molecule id="Q99K74-1"/>
    <property type="nucleotide sequence ID" value="NM_011869.3"/>
</dbReference>
<dbReference type="RefSeq" id="XP_006533368.1">
    <property type="nucleotide sequence ID" value="XM_006533305.2"/>
</dbReference>
<dbReference type="PDB" id="6W1S">
    <property type="method" value="EM"/>
    <property type="resolution" value="4.02 A"/>
    <property type="chains" value="S=4-985"/>
</dbReference>
<dbReference type="PDB" id="8T1I">
    <property type="method" value="EM"/>
    <property type="resolution" value="4.68 A"/>
    <property type="chains" value="S=1-987"/>
</dbReference>
<dbReference type="PDB" id="8T1L">
    <property type="method" value="EM"/>
    <property type="resolution" value="4.83 A"/>
    <property type="chains" value="S=1-987"/>
</dbReference>
<dbReference type="PDBsum" id="6W1S"/>
<dbReference type="PDBsum" id="8T1I"/>
<dbReference type="PDBsum" id="8T1L"/>
<dbReference type="EMDB" id="EMD-21514"/>
<dbReference type="EMDB" id="EMD-40968"/>
<dbReference type="EMDB" id="EMD-40971"/>
<dbReference type="SMR" id="Q99K74"/>
<dbReference type="BioGRID" id="204840">
    <property type="interactions" value="5"/>
</dbReference>
<dbReference type="ComplexPortal" id="CPX-3264">
    <property type="entry name" value="Core mediator complex"/>
</dbReference>
<dbReference type="CORUM" id="Q99K74"/>
<dbReference type="FunCoup" id="Q99K74">
    <property type="interactions" value="2357"/>
</dbReference>
<dbReference type="IntAct" id="Q99K74">
    <property type="interactions" value="4"/>
</dbReference>
<dbReference type="MINT" id="Q99K74"/>
<dbReference type="STRING" id="10090.ENSMUSP00000017354"/>
<dbReference type="GlyGen" id="Q99K74">
    <property type="glycosylation" value="1 site, 1 N-linked glycan (1 site)"/>
</dbReference>
<dbReference type="iPTMnet" id="Q99K74"/>
<dbReference type="PhosphoSitePlus" id="Q99K74"/>
<dbReference type="jPOST" id="Q99K74"/>
<dbReference type="PaxDb" id="10090-ENSMUSP00000017354"/>
<dbReference type="PeptideAtlas" id="Q99K74"/>
<dbReference type="ProteomicsDB" id="295917">
    <molecule id="Q99K74-1"/>
</dbReference>
<dbReference type="ProteomicsDB" id="295918">
    <molecule id="Q99K74-2"/>
</dbReference>
<dbReference type="ProteomicsDB" id="295919">
    <molecule id="Q99K74-3"/>
</dbReference>
<dbReference type="Pumba" id="Q99K74"/>
<dbReference type="Antibodypedia" id="28479">
    <property type="antibodies" value="144 antibodies from 24 providers"/>
</dbReference>
<dbReference type="DNASU" id="23989"/>
<dbReference type="Ensembl" id="ENSMUST00000017354.13">
    <molecule id="Q99K74-1"/>
    <property type="protein sequence ID" value="ENSMUSP00000017354.7"/>
    <property type="gene ID" value="ENSMUSG00000017210.15"/>
</dbReference>
<dbReference type="GeneID" id="23989"/>
<dbReference type="KEGG" id="mmu:23989"/>
<dbReference type="UCSC" id="uc007lgz.1">
    <molecule id="Q99K74-2"/>
    <property type="organism name" value="mouse"/>
</dbReference>
<dbReference type="UCSC" id="uc007lha.1">
    <molecule id="Q99K74-1"/>
    <property type="organism name" value="mouse"/>
</dbReference>
<dbReference type="UCSC" id="uc007lhc.1">
    <molecule id="Q99K74-3"/>
    <property type="organism name" value="mouse"/>
</dbReference>
<dbReference type="AGR" id="MGI:1344385"/>
<dbReference type="CTD" id="9862"/>
<dbReference type="MGI" id="MGI:1344385">
    <property type="gene designation" value="Med24"/>
</dbReference>
<dbReference type="VEuPathDB" id="HostDB:ENSMUSG00000017210"/>
<dbReference type="eggNOG" id="ENOG502QPJD">
    <property type="taxonomic scope" value="Eukaryota"/>
</dbReference>
<dbReference type="GeneTree" id="ENSGT00390000016438"/>
<dbReference type="HOGENOM" id="CLU_007484_0_0_1"/>
<dbReference type="InParanoid" id="Q99K74"/>
<dbReference type="OMA" id="RWSDSQW"/>
<dbReference type="PhylomeDB" id="Q99K74"/>
<dbReference type="TreeFam" id="TF323565"/>
<dbReference type="BioGRID-ORCS" id="23989">
    <property type="hits" value="27 hits in 79 CRISPR screens"/>
</dbReference>
<dbReference type="ChiTaRS" id="Med24">
    <property type="organism name" value="mouse"/>
</dbReference>
<dbReference type="PRO" id="PR:Q99K74"/>
<dbReference type="Proteomes" id="UP000000589">
    <property type="component" value="Chromosome 11"/>
</dbReference>
<dbReference type="RNAct" id="Q99K74">
    <property type="molecule type" value="protein"/>
</dbReference>
<dbReference type="Bgee" id="ENSMUSG00000017210">
    <property type="expression patterns" value="Expressed in primary visual cortex and 229 other cell types or tissues"/>
</dbReference>
<dbReference type="ExpressionAtlas" id="Q99K74">
    <property type="expression patterns" value="baseline and differential"/>
</dbReference>
<dbReference type="GO" id="GO:0070847">
    <property type="term" value="C:core mediator complex"/>
    <property type="evidence" value="ECO:0000266"/>
    <property type="project" value="ComplexPortal"/>
</dbReference>
<dbReference type="GO" id="GO:0016592">
    <property type="term" value="C:mediator complex"/>
    <property type="evidence" value="ECO:0000314"/>
    <property type="project" value="MGI"/>
</dbReference>
<dbReference type="GO" id="GO:0005654">
    <property type="term" value="C:nucleoplasm"/>
    <property type="evidence" value="ECO:0000304"/>
    <property type="project" value="Reactome"/>
</dbReference>
<dbReference type="GO" id="GO:0005634">
    <property type="term" value="C:nucleus"/>
    <property type="evidence" value="ECO:0000266"/>
    <property type="project" value="ComplexPortal"/>
</dbReference>
<dbReference type="GO" id="GO:0046966">
    <property type="term" value="F:nuclear thyroid hormone receptor binding"/>
    <property type="evidence" value="ECO:0007669"/>
    <property type="project" value="Ensembl"/>
</dbReference>
<dbReference type="GO" id="GO:0003713">
    <property type="term" value="F:transcription coactivator activity"/>
    <property type="evidence" value="ECO:0007669"/>
    <property type="project" value="Ensembl"/>
</dbReference>
<dbReference type="GO" id="GO:0032968">
    <property type="term" value="P:positive regulation of transcription elongation by RNA polymerase II"/>
    <property type="evidence" value="ECO:0000303"/>
    <property type="project" value="ComplexPortal"/>
</dbReference>
<dbReference type="GO" id="GO:0060261">
    <property type="term" value="P:positive regulation of transcription initiation by RNA polymerase II"/>
    <property type="evidence" value="ECO:0000303"/>
    <property type="project" value="ComplexPortal"/>
</dbReference>
<dbReference type="GO" id="GO:0051123">
    <property type="term" value="P:RNA polymerase II preinitiation complex assembly"/>
    <property type="evidence" value="ECO:0000303"/>
    <property type="project" value="ComplexPortal"/>
</dbReference>
<dbReference type="GO" id="GO:0035019">
    <property type="term" value="P:somatic stem cell population maintenance"/>
    <property type="evidence" value="ECO:0000315"/>
    <property type="project" value="MGI"/>
</dbReference>
<dbReference type="GO" id="GO:0006366">
    <property type="term" value="P:transcription by RNA polymerase II"/>
    <property type="evidence" value="ECO:0000315"/>
    <property type="project" value="MGI"/>
</dbReference>
<dbReference type="InterPro" id="IPR021429">
    <property type="entry name" value="Mediator_Med24"/>
</dbReference>
<dbReference type="PANTHER" id="PTHR12898">
    <property type="entry name" value="MEDIATOR OF RNA POLYMERASE II TRANSCRIPTION SUBUNIT 24"/>
    <property type="match status" value="1"/>
</dbReference>
<dbReference type="PANTHER" id="PTHR12898:SF1">
    <property type="entry name" value="MEDIATOR OF RNA POLYMERASE II TRANSCRIPTION SUBUNIT 24"/>
    <property type="match status" value="1"/>
</dbReference>
<dbReference type="Pfam" id="PF11277">
    <property type="entry name" value="Med24_N"/>
    <property type="match status" value="1"/>
</dbReference>
<sequence>MKVVNLKQAILQAWKERWSDYQWAINMKKFFPKGATWDILNLAEALLEQAMIGPSPNPLILSYLKYAISSQMVSCSSVLTAISKFDDFSRDLCVQALLDIMDMFCDRLSCHGKAEECIGLCRALLSALHWLLRCTAASAERLQEGLEAGTPAPGEKQLALCLQCLEKTLSSTKNRALLHIAKLEEASSWTAIEHSLLKLGEILANLSNPQLRSQAERCGTLIRSIPSMLSVHSEQLHKTGFPTIHALILLEGTMNLTGEMQPLVEQLMMVKRMQHIPTPLFVLEIWKACFVGLIESPEGTQELKWTAFTYLKIPQVLVKLKKYFHGEKDFTEDVNCAFEFLLKLTPLLDKADQRCNCDCTNFLLQECNKQGLLSEVNFASLVGKRTADRDPQLKSSENANIQPNPGLILRAEPTVTNILKTMDADHSKSPEGLLGVLGHMLSGKSLDLLLAAAAATGKLKSFARKFINLNEFTTHGSGESTKTASVRALLFDISFLMLCHVAQTYGSEVILSESSSGEEVPFFETWMQTCMPEEGKILNPDHPCFRPDSTKVESLVALLNNSSEMKLVQMKWHEACLSISAAILEILNAWENGVLAFESIQKITDNIKGKVCSLAVCAVAWLVAHVRMLGLDEREKSLQMIRQLAGPLYSENTLQFYNERVVIMNSILEHMCADVLQQTATQIKFPSTGVDTMPYWNLLPPKRPIKEVLTDIFAKVLEKGWVDSRSIHILDTLLHMGGVYWFCNNLIKELLKETRKEHTLRAVQLLYSIFCLDMQQVTLVLLGHILPGLLTDSSKWHSLMDPPGTALAKLAVWCALSSYSSHKGQASSRQKKRHREDIEDYVSLFPVEDMQPSKLMRLLSSSDDDANILSSPTDRSMNSSLSASQLHTVNMRDPLNRVLANLFLLISSILGSRTAGPHTQFVQWFMEECVGCLEQDSRGSILQFMPFTTVSELVKVSAMSSPKVVLAITDLSLPLGRQVAAKAIAAL</sequence>
<reference key="1">
    <citation type="journal article" date="1999" name="Mol. Endocrinol.">
        <title>Identification of mouse TRAP100: a transcriptional coregulatory factor for thyroid hormone and vitamin D receptors.</title>
        <authorList>
            <person name="Zhang J."/>
            <person name="Fondell J.D."/>
        </authorList>
    </citation>
    <scope>NUCLEOTIDE SEQUENCE [MRNA] (ISOFORM 2)</scope>
    <scope>FUNCTION</scope>
    <scope>INTERACTION WITH MED1</scope>
    <scope>TISSUE SPECIFICITY</scope>
</reference>
<reference key="2">
    <citation type="journal article" date="2001" name="Mamm. Genome">
        <title>High-throughput sequence identification of gene coding variants within alcohol-related QTLs.</title>
        <authorList>
            <person name="Ehringer M.A."/>
            <person name="Thompson J."/>
            <person name="Conroy O."/>
            <person name="Xu Y."/>
            <person name="Yang F."/>
            <person name="Canniff J."/>
            <person name="Beeson M."/>
            <person name="Gordon L."/>
            <person name="Bennett B."/>
            <person name="Johnson T.E."/>
            <person name="Sikela J.M."/>
        </authorList>
    </citation>
    <scope>NUCLEOTIDE SEQUENCE [MRNA] (ISOFORM 2)</scope>
    <source>
        <strain>ILS</strain>
        <strain>ISS</strain>
    </source>
</reference>
<reference key="3">
    <citation type="journal article" date="2005" name="Science">
        <title>The transcriptional landscape of the mammalian genome.</title>
        <authorList>
            <person name="Carninci P."/>
            <person name="Kasukawa T."/>
            <person name="Katayama S."/>
            <person name="Gough J."/>
            <person name="Frith M.C."/>
            <person name="Maeda N."/>
            <person name="Oyama R."/>
            <person name="Ravasi T."/>
            <person name="Lenhard B."/>
            <person name="Wells C."/>
            <person name="Kodzius R."/>
            <person name="Shimokawa K."/>
            <person name="Bajic V.B."/>
            <person name="Brenner S.E."/>
            <person name="Batalov S."/>
            <person name="Forrest A.R."/>
            <person name="Zavolan M."/>
            <person name="Davis M.J."/>
            <person name="Wilming L.G."/>
            <person name="Aidinis V."/>
            <person name="Allen J.E."/>
            <person name="Ambesi-Impiombato A."/>
            <person name="Apweiler R."/>
            <person name="Aturaliya R.N."/>
            <person name="Bailey T.L."/>
            <person name="Bansal M."/>
            <person name="Baxter L."/>
            <person name="Beisel K.W."/>
            <person name="Bersano T."/>
            <person name="Bono H."/>
            <person name="Chalk A.M."/>
            <person name="Chiu K.P."/>
            <person name="Choudhary V."/>
            <person name="Christoffels A."/>
            <person name="Clutterbuck D.R."/>
            <person name="Crowe M.L."/>
            <person name="Dalla E."/>
            <person name="Dalrymple B.P."/>
            <person name="de Bono B."/>
            <person name="Della Gatta G."/>
            <person name="di Bernardo D."/>
            <person name="Down T."/>
            <person name="Engstrom P."/>
            <person name="Fagiolini M."/>
            <person name="Faulkner G."/>
            <person name="Fletcher C.F."/>
            <person name="Fukushima T."/>
            <person name="Furuno M."/>
            <person name="Futaki S."/>
            <person name="Gariboldi M."/>
            <person name="Georgii-Hemming P."/>
            <person name="Gingeras T.R."/>
            <person name="Gojobori T."/>
            <person name="Green R.E."/>
            <person name="Gustincich S."/>
            <person name="Harbers M."/>
            <person name="Hayashi Y."/>
            <person name="Hensch T.K."/>
            <person name="Hirokawa N."/>
            <person name="Hill D."/>
            <person name="Huminiecki L."/>
            <person name="Iacono M."/>
            <person name="Ikeo K."/>
            <person name="Iwama A."/>
            <person name="Ishikawa T."/>
            <person name="Jakt M."/>
            <person name="Kanapin A."/>
            <person name="Katoh M."/>
            <person name="Kawasawa Y."/>
            <person name="Kelso J."/>
            <person name="Kitamura H."/>
            <person name="Kitano H."/>
            <person name="Kollias G."/>
            <person name="Krishnan S.P."/>
            <person name="Kruger A."/>
            <person name="Kummerfeld S.K."/>
            <person name="Kurochkin I.V."/>
            <person name="Lareau L.F."/>
            <person name="Lazarevic D."/>
            <person name="Lipovich L."/>
            <person name="Liu J."/>
            <person name="Liuni S."/>
            <person name="McWilliam S."/>
            <person name="Madan Babu M."/>
            <person name="Madera M."/>
            <person name="Marchionni L."/>
            <person name="Matsuda H."/>
            <person name="Matsuzawa S."/>
            <person name="Miki H."/>
            <person name="Mignone F."/>
            <person name="Miyake S."/>
            <person name="Morris K."/>
            <person name="Mottagui-Tabar S."/>
            <person name="Mulder N."/>
            <person name="Nakano N."/>
            <person name="Nakauchi H."/>
            <person name="Ng P."/>
            <person name="Nilsson R."/>
            <person name="Nishiguchi S."/>
            <person name="Nishikawa S."/>
            <person name="Nori F."/>
            <person name="Ohara O."/>
            <person name="Okazaki Y."/>
            <person name="Orlando V."/>
            <person name="Pang K.C."/>
            <person name="Pavan W.J."/>
            <person name="Pavesi G."/>
            <person name="Pesole G."/>
            <person name="Petrovsky N."/>
            <person name="Piazza S."/>
            <person name="Reed J."/>
            <person name="Reid J.F."/>
            <person name="Ring B.Z."/>
            <person name="Ringwald M."/>
            <person name="Rost B."/>
            <person name="Ruan Y."/>
            <person name="Salzberg S.L."/>
            <person name="Sandelin A."/>
            <person name="Schneider C."/>
            <person name="Schoenbach C."/>
            <person name="Sekiguchi K."/>
            <person name="Semple C.A."/>
            <person name="Seno S."/>
            <person name="Sessa L."/>
            <person name="Sheng Y."/>
            <person name="Shibata Y."/>
            <person name="Shimada H."/>
            <person name="Shimada K."/>
            <person name="Silva D."/>
            <person name="Sinclair B."/>
            <person name="Sperling S."/>
            <person name="Stupka E."/>
            <person name="Sugiura K."/>
            <person name="Sultana R."/>
            <person name="Takenaka Y."/>
            <person name="Taki K."/>
            <person name="Tammoja K."/>
            <person name="Tan S.L."/>
            <person name="Tang S."/>
            <person name="Taylor M.S."/>
            <person name="Tegner J."/>
            <person name="Teichmann S.A."/>
            <person name="Ueda H.R."/>
            <person name="van Nimwegen E."/>
            <person name="Verardo R."/>
            <person name="Wei C.L."/>
            <person name="Yagi K."/>
            <person name="Yamanishi H."/>
            <person name="Zabarovsky E."/>
            <person name="Zhu S."/>
            <person name="Zimmer A."/>
            <person name="Hide W."/>
            <person name="Bult C."/>
            <person name="Grimmond S.M."/>
            <person name="Teasdale R.D."/>
            <person name="Liu E.T."/>
            <person name="Brusic V."/>
            <person name="Quackenbush J."/>
            <person name="Wahlestedt C."/>
            <person name="Mattick J.S."/>
            <person name="Hume D.A."/>
            <person name="Kai C."/>
            <person name="Sasaki D."/>
            <person name="Tomaru Y."/>
            <person name="Fukuda S."/>
            <person name="Kanamori-Katayama M."/>
            <person name="Suzuki M."/>
            <person name="Aoki J."/>
            <person name="Arakawa T."/>
            <person name="Iida J."/>
            <person name="Imamura K."/>
            <person name="Itoh M."/>
            <person name="Kato T."/>
            <person name="Kawaji H."/>
            <person name="Kawagashira N."/>
            <person name="Kawashima T."/>
            <person name="Kojima M."/>
            <person name="Kondo S."/>
            <person name="Konno H."/>
            <person name="Nakano K."/>
            <person name="Ninomiya N."/>
            <person name="Nishio T."/>
            <person name="Okada M."/>
            <person name="Plessy C."/>
            <person name="Shibata K."/>
            <person name="Shiraki T."/>
            <person name="Suzuki S."/>
            <person name="Tagami M."/>
            <person name="Waki K."/>
            <person name="Watahiki A."/>
            <person name="Okamura-Oho Y."/>
            <person name="Suzuki H."/>
            <person name="Kawai J."/>
            <person name="Hayashizaki Y."/>
        </authorList>
    </citation>
    <scope>NUCLEOTIDE SEQUENCE [LARGE SCALE MRNA] (ISOFORMS 1 AND 3)</scope>
    <source>
        <strain>C57BL/6J</strain>
        <strain>NOD</strain>
        <tissue>Cecum</tissue>
        <tissue>Dendritic cell</tissue>
    </source>
</reference>
<reference key="4">
    <citation type="journal article" date="2009" name="PLoS Biol.">
        <title>Lineage-specific biology revealed by a finished genome assembly of the mouse.</title>
        <authorList>
            <person name="Church D.M."/>
            <person name="Goodstadt L."/>
            <person name="Hillier L.W."/>
            <person name="Zody M.C."/>
            <person name="Goldstein S."/>
            <person name="She X."/>
            <person name="Bult C.J."/>
            <person name="Agarwala R."/>
            <person name="Cherry J.L."/>
            <person name="DiCuccio M."/>
            <person name="Hlavina W."/>
            <person name="Kapustin Y."/>
            <person name="Meric P."/>
            <person name="Maglott D."/>
            <person name="Birtle Z."/>
            <person name="Marques A.C."/>
            <person name="Graves T."/>
            <person name="Zhou S."/>
            <person name="Teague B."/>
            <person name="Potamousis K."/>
            <person name="Churas C."/>
            <person name="Place M."/>
            <person name="Herschleb J."/>
            <person name="Runnheim R."/>
            <person name="Forrest D."/>
            <person name="Amos-Landgraf J."/>
            <person name="Schwartz D.C."/>
            <person name="Cheng Z."/>
            <person name="Lindblad-Toh K."/>
            <person name="Eichler E.E."/>
            <person name="Ponting C.P."/>
        </authorList>
    </citation>
    <scope>NUCLEOTIDE SEQUENCE [LARGE SCALE GENOMIC DNA]</scope>
    <source>
        <strain>C57BL/6J</strain>
    </source>
</reference>
<reference key="5">
    <citation type="journal article" date="2004" name="Genome Res.">
        <title>The status, quality, and expansion of the NIH full-length cDNA project: the Mammalian Gene Collection (MGC).</title>
        <authorList>
            <consortium name="The MGC Project Team"/>
        </authorList>
    </citation>
    <scope>NUCLEOTIDE SEQUENCE [LARGE SCALE MRNA] (ISOFORM 1)</scope>
    <source>
        <strain>FVB/N</strain>
        <tissue>Mammary tumor</tissue>
    </source>
</reference>
<reference key="6">
    <citation type="journal article" date="2002" name="EMBO J.">
        <title>The TRAP100 component of the TRAP/Mediator complex is essential in broad transcriptional events and development.</title>
        <authorList>
            <person name="Ito M."/>
            <person name="Okano H.J."/>
            <person name="Darnell R.B."/>
            <person name="Roeder R.G."/>
        </authorList>
    </citation>
    <scope>FUNCTION</scope>
    <scope>INTERACTION WITH MED10</scope>
    <scope>TISSUE SPECIFICITY</scope>
    <scope>DEVELOPMENTAL STAGE</scope>
</reference>
<reference key="7">
    <citation type="journal article" date="2002" name="Science">
        <title>Transcription control by E1A and MAP kinase pathway via Sur2 mediator subunit.</title>
        <authorList>
            <person name="Stevens J.L."/>
            <person name="Cantin G.T."/>
            <person name="Wang G."/>
            <person name="Shevchenko A."/>
            <person name="Shevchenko A."/>
            <person name="Berk A.J."/>
        </authorList>
    </citation>
    <scope>IDENTIFICATION BY MASS SPECTROMETRY</scope>
    <source>
        <strain>C3H/HeJ</strain>
    </source>
</reference>
<reference key="8">
    <citation type="journal article" date="2007" name="Proc. Natl. Acad. Sci. U.S.A.">
        <title>Large-scale phosphorylation analysis of mouse liver.</title>
        <authorList>
            <person name="Villen J."/>
            <person name="Beausoleil S.A."/>
            <person name="Gerber S.A."/>
            <person name="Gygi S.P."/>
        </authorList>
    </citation>
    <scope>PHOSPHORYLATION [LARGE SCALE ANALYSIS] AT SER-860</scope>
    <scope>IDENTIFICATION BY MASS SPECTROMETRY [LARGE SCALE ANALYSIS]</scope>
    <source>
        <tissue>Liver</tissue>
    </source>
</reference>
<reference key="9">
    <citation type="journal article" date="2010" name="Cell">
        <title>A tissue-specific atlas of mouse protein phosphorylation and expression.</title>
        <authorList>
            <person name="Huttlin E.L."/>
            <person name="Jedrychowski M.P."/>
            <person name="Elias J.E."/>
            <person name="Goswami T."/>
            <person name="Rad R."/>
            <person name="Beausoleil S.A."/>
            <person name="Villen J."/>
            <person name="Haas W."/>
            <person name="Sowa M.E."/>
            <person name="Gygi S.P."/>
        </authorList>
    </citation>
    <scope>PHOSPHORYLATION [LARGE SCALE ANALYSIS] AT SER-860 AND SER-871</scope>
    <scope>IDENTIFICATION BY MASS SPECTROMETRY [LARGE SCALE ANALYSIS]</scope>
    <source>
        <tissue>Brain</tissue>
        <tissue>Brown adipose tissue</tissue>
        <tissue>Heart</tissue>
        <tissue>Kidney</tissue>
        <tissue>Liver</tissue>
        <tissue>Lung</tissue>
        <tissue>Pancreas</tissue>
        <tissue>Spleen</tissue>
        <tissue>Testis</tissue>
    </source>
</reference>
<accession>Q99K74</accession>
<accession>A3KFP0</accession>
<accession>Q8R004</accession>
<accession>Q9D277</accession>
<accession>Q9WVF1</accession>
<keyword id="KW-0002">3D-structure</keyword>
<keyword id="KW-0010">Activator</keyword>
<keyword id="KW-0025">Alternative splicing</keyword>
<keyword id="KW-0539">Nucleus</keyword>
<keyword id="KW-0597">Phosphoprotein</keyword>
<keyword id="KW-1185">Reference proteome</keyword>
<keyword id="KW-0677">Repeat</keyword>
<keyword id="KW-0804">Transcription</keyword>
<keyword id="KW-0805">Transcription regulation</keyword>
<evidence type="ECO:0000250" key="1"/>
<evidence type="ECO:0000269" key="2">
    <source>
    </source>
</evidence>
<evidence type="ECO:0000269" key="3">
    <source>
    </source>
</evidence>
<evidence type="ECO:0000303" key="4">
    <source>
    </source>
</evidence>
<evidence type="ECO:0000303" key="5">
    <source>
    </source>
</evidence>
<evidence type="ECO:0000303" key="6">
    <source>
    </source>
</evidence>
<evidence type="ECO:0000305" key="7"/>
<evidence type="ECO:0007744" key="8">
    <source>
    </source>
</evidence>
<evidence type="ECO:0007744" key="9">
    <source>
    </source>
</evidence>
<proteinExistence type="evidence at protein level"/>
<organism>
    <name type="scientific">Mus musculus</name>
    <name type="common">Mouse</name>
    <dbReference type="NCBI Taxonomy" id="10090"/>
    <lineage>
        <taxon>Eukaryota</taxon>
        <taxon>Metazoa</taxon>
        <taxon>Chordata</taxon>
        <taxon>Craniata</taxon>
        <taxon>Vertebrata</taxon>
        <taxon>Euteleostomi</taxon>
        <taxon>Mammalia</taxon>
        <taxon>Eutheria</taxon>
        <taxon>Euarchontoglires</taxon>
        <taxon>Glires</taxon>
        <taxon>Rodentia</taxon>
        <taxon>Myomorpha</taxon>
        <taxon>Muroidea</taxon>
        <taxon>Muridae</taxon>
        <taxon>Murinae</taxon>
        <taxon>Mus</taxon>
        <taxon>Mus</taxon>
    </lineage>
</organism>
<gene>
    <name type="primary">Med24</name>
    <name type="synonym">D11Ertd307e</name>
    <name type="synonym">Thrap4</name>
    <name type="synonym">Trap100</name>
</gene>
<feature type="chain" id="PRO_0000305912" description="Mediator of RNA polymerase II transcription subunit 24">
    <location>
        <begin position="1"/>
        <end position="987"/>
    </location>
</feature>
<feature type="short sequence motif" description="LXXLL motif 1">
    <location>
        <begin position="128"/>
        <end position="132"/>
    </location>
</feature>
<feature type="short sequence motif" description="LXXLL motif 2">
    <location>
        <begin position="344"/>
        <end position="348"/>
    </location>
</feature>
<feature type="short sequence motif" description="LXXLL motif 3">
    <location>
        <begin position="446"/>
        <end position="450"/>
    </location>
</feature>
<feature type="short sequence motif" description="LXXLL motif 4">
    <location>
        <begin position="555"/>
        <end position="559"/>
    </location>
</feature>
<feature type="short sequence motif" description="LXXLL motif 5">
    <location>
        <begin position="786"/>
        <end position="790"/>
    </location>
</feature>
<feature type="short sequence motif" description="LXXLL motif 6">
    <location>
        <begin position="855"/>
        <end position="859"/>
    </location>
</feature>
<feature type="modified residue" description="Phosphoserine" evidence="8 9">
    <location>
        <position position="860"/>
    </location>
</feature>
<feature type="modified residue" description="Phosphoserine" evidence="9">
    <location>
        <position position="871"/>
    </location>
</feature>
<feature type="splice variant" id="VSP_028355" description="In isoform 2." evidence="4 5">
    <location>
        <begin position="1"/>
        <end position="50"/>
    </location>
</feature>
<feature type="splice variant" id="VSP_028356" description="In isoform 2." evidence="4 5">
    <original>S</original>
    <variation>SLHTSQGLGQGGTRANQPTA</variation>
    <location>
        <position position="187"/>
    </location>
</feature>
<feature type="splice variant" id="VSP_028357" description="In isoform 3." evidence="6">
    <original>VVIMNSILEHMCADVLQQTATQIKFPSTGVDTMPYWNLLPPKRPIKEVLTDIFAKVLEKGWVDSRSIHILDTLLHMGGVYWFCNNLIKELLKETRKEH</original>
    <variation>SVPRPRQVCGRESAPPGTNIPPHALGLRFPGSRSATTSSSIQAPTSPPCLAAEAVHIQGSWTLAPSFAFPYHSLAFLVTHSLSWLSRCLVCVSVSRGF</variation>
    <location>
        <begin position="661"/>
        <end position="758"/>
    </location>
</feature>
<feature type="splice variant" id="VSP_028358" description="In isoform 3." evidence="6">
    <location>
        <begin position="759"/>
        <end position="987"/>
    </location>
</feature>
<feature type="sequence conflict" description="In Ref. 3; BAB32051." evidence="7" ref="3">
    <original>N</original>
    <variation>K</variation>
    <location>
        <position position="26"/>
    </location>
</feature>
<feature type="sequence conflict" description="In Ref. 1; AAD42776." evidence="7" ref="1">
    <original>Q</original>
    <variation>H</variation>
    <location>
        <position position="503"/>
    </location>
</feature>
<feature type="sequence conflict" description="In Ref. 1; AAD42776." evidence="7" ref="1">
    <original>D</original>
    <variation>E</variation>
    <location>
        <position position="541"/>
    </location>
</feature>
<feature type="sequence conflict" description="In Ref. 1; AAD42776." evidence="7" ref="1">
    <original>K</original>
    <variation>N</variation>
    <location>
        <position position="566"/>
    </location>
</feature>
<feature type="sequence conflict" description="In Ref. 1; AAD42776." evidence="7" ref="1">
    <original>K</original>
    <variation>N</variation>
    <location>
        <position position="608"/>
    </location>
</feature>
<feature type="sequence conflict" description="In Ref. 1; AAD42776." evidence="7" ref="1">
    <original>L</original>
    <variation>F</variation>
    <location>
        <position position="699"/>
    </location>
</feature>
<feature type="sequence conflict" description="In Ref. 1; AAD42776." evidence="7" ref="1">
    <original>T</original>
    <variation>R</variation>
    <location>
        <position position="888"/>
    </location>
</feature>
<feature type="sequence conflict" description="In Ref. 1; AAD42776." evidence="7" ref="1">
    <original>S</original>
    <variation>T</variation>
    <location>
        <position position="940"/>
    </location>
</feature>
<feature type="sequence conflict" description="In Ref. 1; AAD42776." evidence="7" ref="1">
    <original>K</original>
    <variation>E</variation>
    <location>
        <position position="963"/>
    </location>
</feature>
<feature type="sequence conflict" description="In Ref. 1; AAD42776." evidence="7" ref="1">
    <original>D</original>
    <variation>H</variation>
    <location>
        <position position="970"/>
    </location>
</feature>
<comment type="function">
    <text evidence="1 2 3">Component of the Mediator complex, a coactivator involved in the regulated transcription of nearly all RNA polymerase II-dependent genes. Mediator functions as a bridge to convey information from gene-specific regulatory proteins to the basal RNA polymerase II transcription machinery. Mediator is recruited to promoters by direct interactions with regulatory proteins and serves as a scaffold for the assembly of a functional preinitiation complex with RNA polymerase II and the general transcription factors (By similarity). Required for basal and activator-dependent transcription.</text>
</comment>
<comment type="subunit">
    <text evidence="1 2 3">Component of the Mediator complex, which is composed of MED1, MED4, MED6, MED7, MED8, MED9, MED10, MED11, MED12, MED13, MED13L, MED14, MED15, MED16, MED17, MED18, MED19, MED20, MED21, MED22, MED23, MED24, MED25, MED26, MED27, MED29, MED30, MED31, CCNC, CDK8 and CDC2L6/CDK11. The MED12, MED13, CCNC and CDK8 subunits form a distinct module termed the CDK8 module. Mediator containing the CDK8 module is less active than Mediator lacking this module in supporting transcriptional activation. Individual preparations of the Mediator complex lacking one or more distinct subunits have been variously termed ARC, CRSP, DRIP, PC2, SMCC and TRAP. Interacts with AR (By similarity). Interacts with MED1 and MED10.</text>
</comment>
<comment type="subcellular location">
    <subcellularLocation>
        <location evidence="7">Nucleus</location>
    </subcellularLocation>
</comment>
<comment type="alternative products">
    <event type="alternative splicing"/>
    <isoform>
        <id>Q99K74-1</id>
        <name>1</name>
        <sequence type="displayed"/>
    </isoform>
    <isoform>
        <id>Q99K74-2</id>
        <name>2</name>
        <sequence type="described" ref="VSP_028355 VSP_028356"/>
    </isoform>
    <isoform>
        <id>Q99K74-3</id>
        <name>3</name>
        <sequence type="described" ref="VSP_028357 VSP_028358"/>
    </isoform>
</comment>
<comment type="tissue specificity">
    <text evidence="2 3">Expressed in the adrenal gland, brain, epididymis, heart, kidney, liver, ovary, pancreas, prostate, skeletal muscle, small intestine, spleen, stomach, testis and thymus.</text>
</comment>
<comment type="developmental stage">
    <text evidence="3">Expressed throughout development; expression levels drop immediately after birth. Strongly expressed throughout the primitive nervous system, the hepatic primoridium and the earliest limb buds.</text>
</comment>
<comment type="similarity">
    <text evidence="7">Belongs to the Mediator complex subunit 24 family.</text>
</comment>
<name>MED24_MOUSE</name>